<accession>C0Q6G0</accession>
<gene>
    <name evidence="1" type="primary">rpsR</name>
    <name type="ordered locus">SPC_4540</name>
</gene>
<proteinExistence type="inferred from homology"/>
<reference key="1">
    <citation type="journal article" date="2009" name="PLoS ONE">
        <title>Salmonella paratyphi C: genetic divergence from Salmonella choleraesuis and pathogenic convergence with Salmonella typhi.</title>
        <authorList>
            <person name="Liu W.-Q."/>
            <person name="Feng Y."/>
            <person name="Wang Y."/>
            <person name="Zou Q.-H."/>
            <person name="Chen F."/>
            <person name="Guo J.-T."/>
            <person name="Peng Y.-H."/>
            <person name="Jin Y."/>
            <person name="Li Y.-G."/>
            <person name="Hu S.-N."/>
            <person name="Johnston R.N."/>
            <person name="Liu G.-R."/>
            <person name="Liu S.-L."/>
        </authorList>
    </citation>
    <scope>NUCLEOTIDE SEQUENCE [LARGE SCALE GENOMIC DNA]</scope>
    <source>
        <strain>RKS4594</strain>
    </source>
</reference>
<comment type="function">
    <text evidence="1">Binds as a heterodimer with protein bS6 to the central domain of the 16S rRNA, where it helps stabilize the platform of the 30S subunit.</text>
</comment>
<comment type="subunit">
    <text evidence="1">Part of the 30S ribosomal subunit. Forms a tight heterodimer with protein bS6.</text>
</comment>
<comment type="similarity">
    <text evidence="1">Belongs to the bacterial ribosomal protein bS18 family.</text>
</comment>
<organism>
    <name type="scientific">Salmonella paratyphi C (strain RKS4594)</name>
    <dbReference type="NCBI Taxonomy" id="476213"/>
    <lineage>
        <taxon>Bacteria</taxon>
        <taxon>Pseudomonadati</taxon>
        <taxon>Pseudomonadota</taxon>
        <taxon>Gammaproteobacteria</taxon>
        <taxon>Enterobacterales</taxon>
        <taxon>Enterobacteriaceae</taxon>
        <taxon>Salmonella</taxon>
    </lineage>
</organism>
<dbReference type="EMBL" id="CP000857">
    <property type="protein sequence ID" value="ACN48590.1"/>
    <property type="molecule type" value="Genomic_DNA"/>
</dbReference>
<dbReference type="RefSeq" id="WP_000135199.1">
    <property type="nucleotide sequence ID" value="NC_012125.1"/>
</dbReference>
<dbReference type="SMR" id="C0Q6G0"/>
<dbReference type="GeneID" id="98186237"/>
<dbReference type="KEGG" id="sei:SPC_4540"/>
<dbReference type="HOGENOM" id="CLU_148710_2_3_6"/>
<dbReference type="Proteomes" id="UP000001599">
    <property type="component" value="Chromosome"/>
</dbReference>
<dbReference type="GO" id="GO:0022627">
    <property type="term" value="C:cytosolic small ribosomal subunit"/>
    <property type="evidence" value="ECO:0007669"/>
    <property type="project" value="TreeGrafter"/>
</dbReference>
<dbReference type="GO" id="GO:0070181">
    <property type="term" value="F:small ribosomal subunit rRNA binding"/>
    <property type="evidence" value="ECO:0007669"/>
    <property type="project" value="TreeGrafter"/>
</dbReference>
<dbReference type="GO" id="GO:0003735">
    <property type="term" value="F:structural constituent of ribosome"/>
    <property type="evidence" value="ECO:0007669"/>
    <property type="project" value="InterPro"/>
</dbReference>
<dbReference type="GO" id="GO:0006412">
    <property type="term" value="P:translation"/>
    <property type="evidence" value="ECO:0007669"/>
    <property type="project" value="UniProtKB-UniRule"/>
</dbReference>
<dbReference type="FunFam" id="4.10.640.10:FF:000001">
    <property type="entry name" value="30S ribosomal protein S18"/>
    <property type="match status" value="1"/>
</dbReference>
<dbReference type="Gene3D" id="4.10.640.10">
    <property type="entry name" value="Ribosomal protein S18"/>
    <property type="match status" value="1"/>
</dbReference>
<dbReference type="HAMAP" id="MF_00270">
    <property type="entry name" value="Ribosomal_bS18"/>
    <property type="match status" value="1"/>
</dbReference>
<dbReference type="InterPro" id="IPR001648">
    <property type="entry name" value="Ribosomal_bS18"/>
</dbReference>
<dbReference type="InterPro" id="IPR018275">
    <property type="entry name" value="Ribosomal_bS18_CS"/>
</dbReference>
<dbReference type="InterPro" id="IPR036870">
    <property type="entry name" value="Ribosomal_bS18_sf"/>
</dbReference>
<dbReference type="NCBIfam" id="TIGR00165">
    <property type="entry name" value="S18"/>
    <property type="match status" value="1"/>
</dbReference>
<dbReference type="PANTHER" id="PTHR13479">
    <property type="entry name" value="30S RIBOSOMAL PROTEIN S18"/>
    <property type="match status" value="1"/>
</dbReference>
<dbReference type="PANTHER" id="PTHR13479:SF40">
    <property type="entry name" value="SMALL RIBOSOMAL SUBUNIT PROTEIN BS18M"/>
    <property type="match status" value="1"/>
</dbReference>
<dbReference type="Pfam" id="PF01084">
    <property type="entry name" value="Ribosomal_S18"/>
    <property type="match status" value="1"/>
</dbReference>
<dbReference type="PRINTS" id="PR00974">
    <property type="entry name" value="RIBOSOMALS18"/>
</dbReference>
<dbReference type="SUPFAM" id="SSF46911">
    <property type="entry name" value="Ribosomal protein S18"/>
    <property type="match status" value="1"/>
</dbReference>
<dbReference type="PROSITE" id="PS00057">
    <property type="entry name" value="RIBOSOMAL_S18"/>
    <property type="match status" value="1"/>
</dbReference>
<evidence type="ECO:0000255" key="1">
    <source>
        <dbReference type="HAMAP-Rule" id="MF_00270"/>
    </source>
</evidence>
<evidence type="ECO:0000305" key="2"/>
<protein>
    <recommendedName>
        <fullName evidence="1">Small ribosomal subunit protein bS18</fullName>
    </recommendedName>
    <alternativeName>
        <fullName evidence="2">30S ribosomal protein S18</fullName>
    </alternativeName>
</protein>
<keyword id="KW-0687">Ribonucleoprotein</keyword>
<keyword id="KW-0689">Ribosomal protein</keyword>
<keyword id="KW-0694">RNA-binding</keyword>
<keyword id="KW-0699">rRNA-binding</keyword>
<sequence length="75" mass="8986">MARYFRRRKFCRFTAEGVQEIDYKDIATLKNYITESGKIVPSRITGTRAKYQRQLARAIKRARYLSLLPYTDRHQ</sequence>
<feature type="chain" id="PRO_1000196527" description="Small ribosomal subunit protein bS18">
    <location>
        <begin position="1"/>
        <end position="75"/>
    </location>
</feature>
<name>RS18_SALPC</name>